<proteinExistence type="evidence at protein level"/>
<comment type="function">
    <text evidence="2">Involved in the biosynthesis of the naphthoic acid (NA) moiety in the chromophore of the enedyine antitumor antibiotic neocarzinostatin (NCS). Catalyzes the hydroxylation at C-7 position of 2-hydroxy-5-methyl-1-naphthoate to yield 2,7-dihydroxy-5-methyl-1-naphthoate.</text>
</comment>
<comment type="catalytic activity">
    <reaction evidence="2">
        <text>2-hydroxy-5-methyl-1-naphthoate + 2 reduced [2Fe-2S]-[ferredoxin] + O2 + 2 H(+) = 2,7-dihydroxy-5-methyl-1-naphthoate + 2 oxidized [2Fe-2S]-[ferredoxin] + H2O</text>
        <dbReference type="Rhea" id="RHEA:42828"/>
        <dbReference type="Rhea" id="RHEA-COMP:10000"/>
        <dbReference type="Rhea" id="RHEA-COMP:10001"/>
        <dbReference type="ChEBI" id="CHEBI:15377"/>
        <dbReference type="ChEBI" id="CHEBI:15378"/>
        <dbReference type="ChEBI" id="CHEBI:15379"/>
        <dbReference type="ChEBI" id="CHEBI:33737"/>
        <dbReference type="ChEBI" id="CHEBI:33738"/>
        <dbReference type="ChEBI" id="CHEBI:78281"/>
        <dbReference type="ChEBI" id="CHEBI:82757"/>
        <dbReference type="EC" id="1.14.15.31"/>
    </reaction>
</comment>
<comment type="cofactor">
    <cofactor evidence="1">
        <name>heme</name>
        <dbReference type="ChEBI" id="CHEBI:30413"/>
    </cofactor>
</comment>
<comment type="pathway">
    <text evidence="6">Antibiotic biosynthesis.</text>
</comment>
<comment type="similarity">
    <text evidence="5">Belongs to the cytochrome P450 family.</text>
</comment>
<keyword id="KW-0045">Antibiotic biosynthesis</keyword>
<keyword id="KW-0349">Heme</keyword>
<keyword id="KW-0408">Iron</keyword>
<keyword id="KW-0479">Metal-binding</keyword>
<keyword id="KW-0503">Monooxygenase</keyword>
<keyword id="KW-0560">Oxidoreductase</keyword>
<protein>
    <recommendedName>
        <fullName evidence="3">2-hydroxy-5-methyl-1-naphthoate 7-hydroxylase</fullName>
        <ecNumber evidence="2">1.14.15.31</ecNumber>
    </recommendedName>
    <alternativeName>
        <fullName evidence="5">Neocarzinostatin biosynthesis protein B3</fullName>
    </alternativeName>
    <alternativeName>
        <fullName evidence="4">P450 hydroxylase</fullName>
    </alternativeName>
</protein>
<accession>Q84HB6</accession>
<evidence type="ECO:0000250" key="1">
    <source>
        <dbReference type="UniProtKB" id="Q00441"/>
    </source>
</evidence>
<evidence type="ECO:0000269" key="2">
    <source>
    </source>
</evidence>
<evidence type="ECO:0000303" key="3">
    <source>
    </source>
</evidence>
<evidence type="ECO:0000303" key="4">
    <source>
    </source>
</evidence>
<evidence type="ECO:0000305" key="5"/>
<evidence type="ECO:0000305" key="6">
    <source>
    </source>
</evidence>
<gene>
    <name evidence="3" type="primary">ncsB3</name>
</gene>
<name>NCSB3_STRCZ</name>
<sequence length="410" mass="45493">MCPYRLDPEGADTHGETARLREQGPIARVELQDGVLAWSVHDYAVAKQIMADERFSKNPRKNWPAYINGEISNGWPLITWVAMDTMATQDGADHARLRKLLLKAFTERRVESMRPHIEKTVKELLDNMAAKADDEIVDIKEMFHAELPTRLMCDLFGVPEERRAEVLAGGHKNIDTRISSEAAEANLGQWQEAISDLVEYKRHHPGDDLTSALIEARDEGSRLSDSELIGTLHLLLGAGSETLVNALAHSSLALLVDADLRKKVTSGEIPWVNVWEETLRVESPVAHLPFRYATEDFEIGGVKISKGDPLLVDFAGIGRDPAVHSDAPDEFDALRPDKTHLSFGHGVHYCLGARLAKHAWMIGIPALFERFPDMELAVRRDELKGQGSFVVNGHASLPVHLKGRAAALAR</sequence>
<dbReference type="EC" id="1.14.15.31" evidence="2"/>
<dbReference type="EMBL" id="AY117439">
    <property type="protein sequence ID" value="AAM77997.1"/>
    <property type="molecule type" value="Genomic_DNA"/>
</dbReference>
<dbReference type="SMR" id="Q84HB6"/>
<dbReference type="KEGG" id="ag:AAM77997"/>
<dbReference type="BRENDA" id="1.14.15.31">
    <property type="organism ID" value="13527"/>
</dbReference>
<dbReference type="GO" id="GO:0020037">
    <property type="term" value="F:heme binding"/>
    <property type="evidence" value="ECO:0007669"/>
    <property type="project" value="InterPro"/>
</dbReference>
<dbReference type="GO" id="GO:0005506">
    <property type="term" value="F:iron ion binding"/>
    <property type="evidence" value="ECO:0007669"/>
    <property type="project" value="InterPro"/>
</dbReference>
<dbReference type="GO" id="GO:0004497">
    <property type="term" value="F:monooxygenase activity"/>
    <property type="evidence" value="ECO:0007669"/>
    <property type="project" value="UniProtKB-KW"/>
</dbReference>
<dbReference type="GO" id="GO:0016705">
    <property type="term" value="F:oxidoreductase activity, acting on paired donors, with incorporation or reduction of molecular oxygen"/>
    <property type="evidence" value="ECO:0000314"/>
    <property type="project" value="UniProtKB"/>
</dbReference>
<dbReference type="GO" id="GO:0017000">
    <property type="term" value="P:antibiotic biosynthetic process"/>
    <property type="evidence" value="ECO:0007669"/>
    <property type="project" value="UniProtKB-KW"/>
</dbReference>
<dbReference type="CDD" id="cd11029">
    <property type="entry name" value="CYP107-like"/>
    <property type="match status" value="1"/>
</dbReference>
<dbReference type="FunFam" id="1.10.630.10:FF:000018">
    <property type="entry name" value="Cytochrome P450 monooxygenase"/>
    <property type="match status" value="1"/>
</dbReference>
<dbReference type="Gene3D" id="1.10.630.10">
    <property type="entry name" value="Cytochrome P450"/>
    <property type="match status" value="1"/>
</dbReference>
<dbReference type="InterPro" id="IPR001128">
    <property type="entry name" value="Cyt_P450"/>
</dbReference>
<dbReference type="InterPro" id="IPR002397">
    <property type="entry name" value="Cyt_P450_B"/>
</dbReference>
<dbReference type="InterPro" id="IPR017972">
    <property type="entry name" value="Cyt_P450_CS"/>
</dbReference>
<dbReference type="InterPro" id="IPR036396">
    <property type="entry name" value="Cyt_P450_sf"/>
</dbReference>
<dbReference type="PANTHER" id="PTHR46696:SF1">
    <property type="entry name" value="CYTOCHROME P450 YJIB-RELATED"/>
    <property type="match status" value="1"/>
</dbReference>
<dbReference type="PANTHER" id="PTHR46696">
    <property type="entry name" value="P450, PUTATIVE (EUROFUNG)-RELATED"/>
    <property type="match status" value="1"/>
</dbReference>
<dbReference type="Pfam" id="PF00067">
    <property type="entry name" value="p450"/>
    <property type="match status" value="1"/>
</dbReference>
<dbReference type="PRINTS" id="PR00359">
    <property type="entry name" value="BP450"/>
</dbReference>
<dbReference type="SUPFAM" id="SSF48264">
    <property type="entry name" value="Cytochrome P450"/>
    <property type="match status" value="1"/>
</dbReference>
<dbReference type="PROSITE" id="PS00086">
    <property type="entry name" value="CYTOCHROME_P450"/>
    <property type="match status" value="1"/>
</dbReference>
<reference key="1">
    <citation type="journal article" date="2005" name="Chem. Biol.">
        <title>The neocarzinostatin biosynthetic gene cluster from Streptomyces carzinostaticus ATCC 15944 involving two iterative type I polyketide synthases.</title>
        <authorList>
            <person name="Liu W."/>
            <person name="Nonaka K."/>
            <person name="Nie L."/>
            <person name="Zhang J."/>
            <person name="Christenson S.D."/>
            <person name="Bae J."/>
            <person name="Van Lanen S.G."/>
            <person name="Zazopoulos E."/>
            <person name="Farnet C.M."/>
            <person name="Yang C.F."/>
            <person name="Shen B."/>
        </authorList>
    </citation>
    <scope>NUCLEOTIDE SEQUENCE [GENOMIC DNA]</scope>
    <scope>PATHWAY</scope>
    <source>
        <strain>ATCC 15944 / E-793 / F-51</strain>
    </source>
</reference>
<reference key="2">
    <citation type="journal article" date="2010" name="FEMS Microbiol. Lett.">
        <title>In vivo characterization of NcsB3 to establish the complete biosynthesis of the naphthoic acid moiety of the neocarzinostatin chromophore.</title>
        <authorList>
            <person name="Hang V.T."/>
            <person name="Oh T.J."/>
            <person name="Yamaguchi T."/>
            <person name="Sohng J.K."/>
        </authorList>
    </citation>
    <scope>FUNCTION</scope>
    <scope>CATALYTIC ACTIVITY</scope>
</reference>
<feature type="chain" id="PRO_0000430703" description="2-hydroxy-5-methyl-1-naphthoate 7-hydroxylase">
    <location>
        <begin position="1"/>
        <end position="410"/>
    </location>
</feature>
<feature type="binding site" description="axial binding residue" evidence="1">
    <location>
        <position position="350"/>
    </location>
    <ligand>
        <name>heme</name>
        <dbReference type="ChEBI" id="CHEBI:30413"/>
    </ligand>
    <ligandPart>
        <name>Fe</name>
        <dbReference type="ChEBI" id="CHEBI:18248"/>
    </ligandPart>
</feature>
<organism>
    <name type="scientific">Streptomyces carzinostaticus</name>
    <dbReference type="NCBI Taxonomy" id="1897"/>
    <lineage>
        <taxon>Bacteria</taxon>
        <taxon>Bacillati</taxon>
        <taxon>Actinomycetota</taxon>
        <taxon>Actinomycetes</taxon>
        <taxon>Kitasatosporales</taxon>
        <taxon>Streptomycetaceae</taxon>
        <taxon>Streptomyces</taxon>
    </lineage>
</organism>